<name>CAR11_MOUSE</name>
<organism>
    <name type="scientific">Mus musculus</name>
    <name type="common">Mouse</name>
    <dbReference type="NCBI Taxonomy" id="10090"/>
    <lineage>
        <taxon>Eukaryota</taxon>
        <taxon>Metazoa</taxon>
        <taxon>Chordata</taxon>
        <taxon>Craniata</taxon>
        <taxon>Vertebrata</taxon>
        <taxon>Euteleostomi</taxon>
        <taxon>Mammalia</taxon>
        <taxon>Eutheria</taxon>
        <taxon>Euarchontoglires</taxon>
        <taxon>Glires</taxon>
        <taxon>Rodentia</taxon>
        <taxon>Myomorpha</taxon>
        <taxon>Muroidea</taxon>
        <taxon>Muridae</taxon>
        <taxon>Murinae</taxon>
        <taxon>Mus</taxon>
        <taxon>Mus</taxon>
    </lineage>
</organism>
<proteinExistence type="evidence at protein level"/>
<dbReference type="EMBL" id="AY135367">
    <property type="protein sequence ID" value="AAN10150.1"/>
    <property type="molecule type" value="mRNA"/>
</dbReference>
<dbReference type="EMBL" id="AK131134">
    <property type="protein sequence ID" value="BAD21384.1"/>
    <property type="status" value="ALT_INIT"/>
    <property type="molecule type" value="mRNA"/>
</dbReference>
<dbReference type="EMBL" id="BC096592">
    <property type="protein sequence ID" value="AAH96592.1"/>
    <property type="molecule type" value="mRNA"/>
</dbReference>
<dbReference type="EMBL" id="AK037968">
    <property type="protein sequence ID" value="BAC29910.1"/>
    <property type="molecule type" value="mRNA"/>
</dbReference>
<dbReference type="CCDS" id="CCDS51686.1">
    <molecule id="Q8CIS0-2"/>
</dbReference>
<dbReference type="RefSeq" id="NP_780571.2">
    <molecule id="Q8CIS0-2"/>
    <property type="nucleotide sequence ID" value="NM_175362.3"/>
</dbReference>
<dbReference type="PDB" id="4I16">
    <property type="method" value="X-ray"/>
    <property type="resolution" value="1.75 A"/>
    <property type="chains" value="A=18-110"/>
</dbReference>
<dbReference type="PDBsum" id="4I16"/>
<dbReference type="SMR" id="Q8CIS0"/>
<dbReference type="BioGRID" id="224389">
    <property type="interactions" value="9"/>
</dbReference>
<dbReference type="DIP" id="DIP-49692N"/>
<dbReference type="FunCoup" id="Q8CIS0">
    <property type="interactions" value="239"/>
</dbReference>
<dbReference type="IntAct" id="Q8CIS0">
    <property type="interactions" value="7"/>
</dbReference>
<dbReference type="MINT" id="Q8CIS0"/>
<dbReference type="STRING" id="10090.ENSMUSP00000082941"/>
<dbReference type="iPTMnet" id="Q8CIS0"/>
<dbReference type="PhosphoSitePlus" id="Q8CIS0"/>
<dbReference type="SwissPalm" id="Q8CIS0"/>
<dbReference type="jPOST" id="Q8CIS0"/>
<dbReference type="PaxDb" id="10090-ENSMUSP00000082941"/>
<dbReference type="PeptideAtlas" id="Q8CIS0"/>
<dbReference type="ProteomicsDB" id="265276">
    <molecule id="Q8CIS0-1"/>
</dbReference>
<dbReference type="ProteomicsDB" id="265277">
    <molecule id="Q8CIS0-2"/>
</dbReference>
<dbReference type="Antibodypedia" id="11155">
    <property type="antibodies" value="324 antibodies from 44 providers"/>
</dbReference>
<dbReference type="Ensembl" id="ENSMUST00000085786.7">
    <molecule id="Q8CIS0-2"/>
    <property type="protein sequence ID" value="ENSMUSP00000082941.6"/>
    <property type="gene ID" value="ENSMUSG00000036526.9"/>
</dbReference>
<dbReference type="GeneID" id="108723"/>
<dbReference type="KEGG" id="mmu:108723"/>
<dbReference type="UCSC" id="uc009aik.2">
    <molecule id="Q8CIS0-2"/>
    <property type="organism name" value="mouse"/>
</dbReference>
<dbReference type="UCSC" id="uc012egd.1">
    <molecule id="Q8CIS0-1"/>
    <property type="organism name" value="mouse"/>
</dbReference>
<dbReference type="AGR" id="MGI:1916978"/>
<dbReference type="CTD" id="84433"/>
<dbReference type="MGI" id="MGI:1916978">
    <property type="gene designation" value="Card11"/>
</dbReference>
<dbReference type="VEuPathDB" id="HostDB:ENSMUSG00000036526"/>
<dbReference type="eggNOG" id="KOG0708">
    <property type="taxonomic scope" value="Eukaryota"/>
</dbReference>
<dbReference type="GeneTree" id="ENSGT00940000158573"/>
<dbReference type="HOGENOM" id="CLU_009760_1_0_1"/>
<dbReference type="InParanoid" id="Q8CIS0"/>
<dbReference type="OMA" id="DRYSHGA"/>
<dbReference type="OrthoDB" id="39466at9989"/>
<dbReference type="PhylomeDB" id="Q8CIS0"/>
<dbReference type="TreeFam" id="TF351139"/>
<dbReference type="Reactome" id="R-MMU-1169091">
    <property type="pathway name" value="Activation of NF-kappaB in B cells"/>
</dbReference>
<dbReference type="Reactome" id="R-MMU-202424">
    <property type="pathway name" value="Downstream TCR signaling"/>
</dbReference>
<dbReference type="Reactome" id="R-MMU-2871837">
    <property type="pathway name" value="FCERI mediated NF-kB activation"/>
</dbReference>
<dbReference type="Reactome" id="R-MMU-5607764">
    <property type="pathway name" value="CLEC7A (Dectin-1) signaling"/>
</dbReference>
<dbReference type="BioGRID-ORCS" id="108723">
    <property type="hits" value="2 hits in 79 CRISPR screens"/>
</dbReference>
<dbReference type="ChiTaRS" id="Card11">
    <property type="organism name" value="mouse"/>
</dbReference>
<dbReference type="EvolutionaryTrace" id="Q8CIS0"/>
<dbReference type="PRO" id="PR:Q8CIS0"/>
<dbReference type="Proteomes" id="UP000000589">
    <property type="component" value="Chromosome 5"/>
</dbReference>
<dbReference type="RNAct" id="Q8CIS0">
    <property type="molecule type" value="protein"/>
</dbReference>
<dbReference type="Bgee" id="ENSMUSG00000036526">
    <property type="expression patterns" value="Expressed in mesenteric lymph node and 47 other cell types or tissues"/>
</dbReference>
<dbReference type="GO" id="GO:0032449">
    <property type="term" value="C:CBM complex"/>
    <property type="evidence" value="ECO:0000250"/>
    <property type="project" value="UniProtKB"/>
</dbReference>
<dbReference type="GO" id="GO:0005737">
    <property type="term" value="C:cytoplasm"/>
    <property type="evidence" value="ECO:0007669"/>
    <property type="project" value="UniProtKB-SubCell"/>
</dbReference>
<dbReference type="GO" id="GO:0001772">
    <property type="term" value="C:immunological synapse"/>
    <property type="evidence" value="ECO:0000314"/>
    <property type="project" value="MGI"/>
</dbReference>
<dbReference type="GO" id="GO:0045121">
    <property type="term" value="C:membrane raft"/>
    <property type="evidence" value="ECO:0007669"/>
    <property type="project" value="UniProtKB-SubCell"/>
</dbReference>
<dbReference type="GO" id="GO:0005886">
    <property type="term" value="C:plasma membrane"/>
    <property type="evidence" value="ECO:0000314"/>
    <property type="project" value="MGI"/>
</dbReference>
<dbReference type="GO" id="GO:0050700">
    <property type="term" value="F:CARD domain binding"/>
    <property type="evidence" value="ECO:0007669"/>
    <property type="project" value="Ensembl"/>
</dbReference>
<dbReference type="GO" id="GO:0030183">
    <property type="term" value="P:B cell differentiation"/>
    <property type="evidence" value="ECO:0000315"/>
    <property type="project" value="MGI"/>
</dbReference>
<dbReference type="GO" id="GO:0042100">
    <property type="term" value="P:B cell proliferation"/>
    <property type="evidence" value="ECO:0000315"/>
    <property type="project" value="MGI"/>
</dbReference>
<dbReference type="GO" id="GO:0007249">
    <property type="term" value="P:canonical NF-kappaB signal transduction"/>
    <property type="evidence" value="ECO:0000250"/>
    <property type="project" value="UniProtKB"/>
</dbReference>
<dbReference type="GO" id="GO:0035739">
    <property type="term" value="P:CD4-positive, alpha-beta T cell proliferation"/>
    <property type="evidence" value="ECO:0000315"/>
    <property type="project" value="MGI"/>
</dbReference>
<dbReference type="GO" id="GO:0048872">
    <property type="term" value="P:homeostasis of number of cells"/>
    <property type="evidence" value="ECO:0000315"/>
    <property type="project" value="MGI"/>
</dbReference>
<dbReference type="GO" id="GO:0046649">
    <property type="term" value="P:lymphocyte activation"/>
    <property type="evidence" value="ECO:0000315"/>
    <property type="project" value="MGI"/>
</dbReference>
<dbReference type="GO" id="GO:0030890">
    <property type="term" value="P:positive regulation of B cell proliferation"/>
    <property type="evidence" value="ECO:0000315"/>
    <property type="project" value="MGI"/>
</dbReference>
<dbReference type="GO" id="GO:0043123">
    <property type="term" value="P:positive regulation of canonical NF-kappaB signal transduction"/>
    <property type="evidence" value="ECO:0000315"/>
    <property type="project" value="UniProtKB"/>
</dbReference>
<dbReference type="GO" id="GO:2000563">
    <property type="term" value="P:positive regulation of CD4-positive, alpha-beta T cell proliferation"/>
    <property type="evidence" value="ECO:0000315"/>
    <property type="project" value="MGI"/>
</dbReference>
<dbReference type="GO" id="GO:0032743">
    <property type="term" value="P:positive regulation of interleukin-2 production"/>
    <property type="evidence" value="ECO:0000315"/>
    <property type="project" value="MGI"/>
</dbReference>
<dbReference type="GO" id="GO:0051092">
    <property type="term" value="P:positive regulation of NF-kappaB transcription factor activity"/>
    <property type="evidence" value="ECO:0000315"/>
    <property type="project" value="UniProtKB"/>
</dbReference>
<dbReference type="GO" id="GO:0050870">
    <property type="term" value="P:positive regulation of T cell activation"/>
    <property type="evidence" value="ECO:0000315"/>
    <property type="project" value="MGI"/>
</dbReference>
<dbReference type="GO" id="GO:0050862">
    <property type="term" value="P:positive regulation of T cell receptor signaling pathway"/>
    <property type="evidence" value="ECO:0000315"/>
    <property type="project" value="UniProtKB"/>
</dbReference>
<dbReference type="GO" id="GO:0051260">
    <property type="term" value="P:protein homooligomerization"/>
    <property type="evidence" value="ECO:0000250"/>
    <property type="project" value="UniProtKB"/>
</dbReference>
<dbReference type="GO" id="GO:0042981">
    <property type="term" value="P:regulation of apoptotic process"/>
    <property type="evidence" value="ECO:0007669"/>
    <property type="project" value="InterPro"/>
</dbReference>
<dbReference type="GO" id="GO:0045577">
    <property type="term" value="P:regulation of B cell differentiation"/>
    <property type="evidence" value="ECO:0000315"/>
    <property type="project" value="MGI"/>
</dbReference>
<dbReference type="GO" id="GO:0050776">
    <property type="term" value="P:regulation of immune response"/>
    <property type="evidence" value="ECO:0000315"/>
    <property type="project" value="MGI"/>
</dbReference>
<dbReference type="GO" id="GO:0045580">
    <property type="term" value="P:regulation of T cell differentiation"/>
    <property type="evidence" value="ECO:0000315"/>
    <property type="project" value="MGI"/>
</dbReference>
<dbReference type="GO" id="GO:0007165">
    <property type="term" value="P:signal transduction"/>
    <property type="evidence" value="ECO:0000314"/>
    <property type="project" value="MGI"/>
</dbReference>
<dbReference type="GO" id="GO:0042110">
    <property type="term" value="P:T cell activation"/>
    <property type="evidence" value="ECO:0000315"/>
    <property type="project" value="MGI"/>
</dbReference>
<dbReference type="GO" id="GO:0031295">
    <property type="term" value="P:T cell costimulation"/>
    <property type="evidence" value="ECO:0000250"/>
    <property type="project" value="UniProtKB"/>
</dbReference>
<dbReference type="GO" id="GO:0045061">
    <property type="term" value="P:thymic T cell selection"/>
    <property type="evidence" value="ECO:0000315"/>
    <property type="project" value="MGI"/>
</dbReference>
<dbReference type="GO" id="GO:0038202">
    <property type="term" value="P:TORC1 signaling"/>
    <property type="evidence" value="ECO:0000250"/>
    <property type="project" value="UniProtKB"/>
</dbReference>
<dbReference type="CDD" id="cd08808">
    <property type="entry name" value="CARD_CARD11_CARMA1"/>
    <property type="match status" value="1"/>
</dbReference>
<dbReference type="CDD" id="cd06736">
    <property type="entry name" value="PDZ_CARD11_CARD14-like"/>
    <property type="match status" value="1"/>
</dbReference>
<dbReference type="FunFam" id="2.30.30.40:FF:000148">
    <property type="entry name" value="Caspase recruitment domain family member 11"/>
    <property type="match status" value="1"/>
</dbReference>
<dbReference type="FunFam" id="2.30.42.10:FF:000136">
    <property type="entry name" value="Caspase recruitment domain family member 11"/>
    <property type="match status" value="1"/>
</dbReference>
<dbReference type="FunFam" id="1.10.533.10:FF:000003">
    <property type="entry name" value="Caspase recruitment domain family, member 11"/>
    <property type="match status" value="1"/>
</dbReference>
<dbReference type="FunFam" id="3.40.50.300:FF:000770">
    <property type="entry name" value="Caspase recruitment domain family, member 11"/>
    <property type="match status" value="1"/>
</dbReference>
<dbReference type="Gene3D" id="2.30.42.10">
    <property type="match status" value="1"/>
</dbReference>
<dbReference type="Gene3D" id="1.10.533.10">
    <property type="entry name" value="Death Domain, Fas"/>
    <property type="match status" value="1"/>
</dbReference>
<dbReference type="Gene3D" id="3.40.50.300">
    <property type="entry name" value="P-loop containing nucleotide triphosphate hydrolases"/>
    <property type="match status" value="1"/>
</dbReference>
<dbReference type="Gene3D" id="2.30.30.40">
    <property type="entry name" value="SH3 Domains"/>
    <property type="match status" value="1"/>
</dbReference>
<dbReference type="InterPro" id="IPR001315">
    <property type="entry name" value="CARD"/>
</dbReference>
<dbReference type="InterPro" id="IPR042141">
    <property type="entry name" value="CARD_CARD11"/>
</dbReference>
<dbReference type="InterPro" id="IPR011029">
    <property type="entry name" value="DEATH-like_dom_sf"/>
</dbReference>
<dbReference type="InterPro" id="IPR027417">
    <property type="entry name" value="P-loop_NTPase"/>
</dbReference>
<dbReference type="InterPro" id="IPR036034">
    <property type="entry name" value="PDZ_sf"/>
</dbReference>
<dbReference type="PANTHER" id="PTHR14559">
    <property type="entry name" value="CASPASE RECRUITMENT DOMAIN FAMILY"/>
    <property type="match status" value="1"/>
</dbReference>
<dbReference type="PANTHER" id="PTHR14559:SF4">
    <property type="entry name" value="CASPASE RECRUITMENT DOMAIN-CONTAINING PROTEIN 11"/>
    <property type="match status" value="1"/>
</dbReference>
<dbReference type="Pfam" id="PF00619">
    <property type="entry name" value="CARD"/>
    <property type="match status" value="1"/>
</dbReference>
<dbReference type="SUPFAM" id="SSF47986">
    <property type="entry name" value="DEATH domain"/>
    <property type="match status" value="1"/>
</dbReference>
<dbReference type="SUPFAM" id="SSF52540">
    <property type="entry name" value="P-loop containing nucleoside triphosphate hydrolases"/>
    <property type="match status" value="1"/>
</dbReference>
<dbReference type="SUPFAM" id="SSF50156">
    <property type="entry name" value="PDZ domain-like"/>
    <property type="match status" value="1"/>
</dbReference>
<dbReference type="PROSITE" id="PS50209">
    <property type="entry name" value="CARD"/>
    <property type="match status" value="1"/>
</dbReference>
<accession>Q8CIS0</accession>
<accession>Q4VA14</accession>
<accession>Q6KAS3</accession>
<accession>Q8BYV0</accession>
<protein>
    <recommendedName>
        <fullName evidence="9">Caspase recruitment domain-containing protein 11</fullName>
    </recommendedName>
    <alternativeName>
        <fullName evidence="12">CARD-containing MAGUK protein 1</fullName>
        <shortName evidence="12">Carma 1</shortName>
    </alternativeName>
</protein>
<feature type="chain" id="PRO_0000320102" description="Caspase recruitment domain-containing protein 11">
    <location>
        <begin position="1"/>
        <end position="1159"/>
    </location>
</feature>
<feature type="domain" description="CARD" evidence="3">
    <location>
        <begin position="18"/>
        <end position="110"/>
    </location>
</feature>
<feature type="domain" description="PDZ">
    <location>
        <begin position="672"/>
        <end position="760"/>
    </location>
</feature>
<feature type="domain" description="Guanylate kinase-like">
    <location>
        <begin position="978"/>
        <end position="1145"/>
    </location>
</feature>
<feature type="region of interest" description="Linker" evidence="1">
    <location>
        <begin position="111"/>
        <end position="128"/>
    </location>
</feature>
<feature type="region of interest" description="Disordered" evidence="4">
    <location>
        <begin position="441"/>
        <end position="496"/>
    </location>
</feature>
<feature type="region of interest" description="Inhibitory domain (ID)" evidence="1">
    <location>
        <begin position="450"/>
        <end position="671"/>
    </location>
</feature>
<feature type="region of interest" description="Disordered" evidence="4">
    <location>
        <begin position="532"/>
        <end position="578"/>
    </location>
</feature>
<feature type="region of interest" description="Disordered" evidence="4">
    <location>
        <begin position="610"/>
        <end position="631"/>
    </location>
</feature>
<feature type="coiled-coil region" evidence="2">
    <location>
        <begin position="176"/>
        <end position="449"/>
    </location>
</feature>
<feature type="compositionally biased region" description="Polar residues" evidence="4">
    <location>
        <begin position="457"/>
        <end position="472"/>
    </location>
</feature>
<feature type="compositionally biased region" description="Acidic residues" evidence="4">
    <location>
        <begin position="473"/>
        <end position="484"/>
    </location>
</feature>
<feature type="compositionally biased region" description="Low complexity" evidence="4">
    <location>
        <begin position="540"/>
        <end position="554"/>
    </location>
</feature>
<feature type="compositionally biased region" description="Low complexity" evidence="4">
    <location>
        <begin position="620"/>
        <end position="630"/>
    </location>
</feature>
<feature type="modified residue" description="Phosphoserine" evidence="1">
    <location>
        <position position="448"/>
    </location>
</feature>
<feature type="modified residue" description="Phosphoserine" evidence="16">
    <location>
        <position position="466"/>
    </location>
</feature>
<feature type="modified residue" description="Phosphoserine" evidence="16">
    <location>
        <position position="512"/>
    </location>
</feature>
<feature type="modified residue" description="Phosphoserine" evidence="1">
    <location>
        <position position="540"/>
    </location>
</feature>
<feature type="modified residue" description="Phosphoserine; by PKC/PRKCB and PKC/PRKCQ" evidence="7">
    <location>
        <position position="564"/>
    </location>
</feature>
<feature type="modified residue" description="Phosphoserine" evidence="1">
    <location>
        <position position="598"/>
    </location>
</feature>
<feature type="modified residue" description="Phosphoserine; by PKC/PRKCB and PKC/PRKCQ" evidence="7">
    <location>
        <position position="649"/>
    </location>
</feature>
<feature type="modified residue" description="Phosphoserine; by PKC/PRKCB and PKC/PRKCQ" evidence="7">
    <location>
        <position position="657"/>
    </location>
</feature>
<feature type="modified residue" description="Phosphoserine" evidence="16">
    <location>
        <position position="891"/>
    </location>
</feature>
<feature type="modified residue" description="Phosphoserine" evidence="1">
    <location>
        <position position="930"/>
    </location>
</feature>
<feature type="disulfide bond" description="Interchain" evidence="1">
    <location>
        <position position="28"/>
    </location>
</feature>
<feature type="splice variant" id="VSP_031595" description="In isoform 2." evidence="10 11">
    <location>
        <begin position="524"/>
        <end position="528"/>
    </location>
</feature>
<feature type="mutagenesis site" description="Strongly decreased interaction with BCL10." evidence="8">
    <original>R</original>
    <variation>A</variation>
    <location>
        <position position="35"/>
    </location>
</feature>
<feature type="mutagenesis site" description="Slightly decreased interaction with BCL10." evidence="8">
    <original>K</original>
    <variation>A</variation>
    <location>
        <position position="41"/>
    </location>
</feature>
<feature type="mutagenesis site" description="Decreased interaction with BCL10." evidence="8">
    <original>K</original>
    <variation>A</variation>
    <location>
        <position position="69"/>
    </location>
</feature>
<feature type="mutagenesis site" description="Decreased interaction with BCL10." evidence="8">
    <original>R</original>
    <variation>A</variation>
    <location>
        <position position="72"/>
    </location>
</feature>
<feature type="sequence conflict" description="In Ref. 1; AAN10150." evidence="13" ref="1">
    <original>E</original>
    <variation>Q</variation>
    <location>
        <position position="258"/>
    </location>
</feature>
<feature type="sequence conflict" description="In Ref. 4; BAC29910." evidence="13" ref="4">
    <original>R</original>
    <variation>L</variation>
    <location>
        <position position="860"/>
    </location>
</feature>
<feature type="helix" evidence="17">
    <location>
        <begin position="24"/>
        <end position="27"/>
    </location>
</feature>
<feature type="helix" evidence="17">
    <location>
        <begin position="30"/>
        <end position="36"/>
    </location>
</feature>
<feature type="helix" evidence="17">
    <location>
        <begin position="39"/>
        <end position="48"/>
    </location>
</feature>
<feature type="helix" evidence="17">
    <location>
        <begin position="54"/>
        <end position="61"/>
    </location>
</feature>
<feature type="turn" evidence="17">
    <location>
        <begin position="70"/>
        <end position="73"/>
    </location>
</feature>
<feature type="helix" evidence="17">
    <location>
        <begin position="74"/>
        <end position="80"/>
    </location>
</feature>
<feature type="helix" evidence="17">
    <location>
        <begin position="84"/>
        <end position="98"/>
    </location>
</feature>
<feature type="helix" evidence="17">
    <location>
        <begin position="100"/>
        <end position="107"/>
    </location>
</feature>
<reference key="1">
    <citation type="journal article" date="2002" name="EMBO J.">
        <title>CARD11 mediates factor-specific activation of NF-kappaB by the T cell receptor complex.</title>
        <authorList>
            <person name="Pomerantz J.L."/>
            <person name="Denny E.M."/>
            <person name="Baltimore D."/>
        </authorList>
    </citation>
    <scope>NUCLEOTIDE SEQUENCE [MRNA] (ISOFORM 1)</scope>
    <scope>FUNCTION</scope>
    <source>
        <tissue>Thymus</tissue>
    </source>
</reference>
<reference key="2">
    <citation type="journal article" date="2004" name="DNA Res.">
        <title>Prediction of the coding sequences of mouse homologues of FLJ genes: the complete nucleotide sequences of 110 mouse FLJ-homologous cDNAs identified by screening of terminal sequences of cDNA clones randomly sampled from size-fractionated libraries.</title>
        <authorList>
            <person name="Okazaki N."/>
            <person name="Kikuno R."/>
            <person name="Ohara R."/>
            <person name="Inamoto S."/>
            <person name="Koseki H."/>
            <person name="Hiraoka S."/>
            <person name="Saga Y."/>
            <person name="Kitamura H."/>
            <person name="Nakagawa T."/>
            <person name="Nagase T."/>
            <person name="Ohara O."/>
            <person name="Koga H."/>
        </authorList>
    </citation>
    <scope>NUCLEOTIDE SEQUENCE [LARGE SCALE MRNA] (ISOFORM 2)</scope>
    <source>
        <tissue>Thymus</tissue>
    </source>
</reference>
<reference key="3">
    <citation type="journal article" date="2004" name="Genome Res.">
        <title>The status, quality, and expansion of the NIH full-length cDNA project: the Mammalian Gene Collection (MGC).</title>
        <authorList>
            <consortium name="The MGC Project Team"/>
        </authorList>
    </citation>
    <scope>NUCLEOTIDE SEQUENCE [LARGE SCALE MRNA] (ISOFORM 2)</scope>
    <source>
        <strain>129</strain>
        <tissue>Mammary tumor</tissue>
    </source>
</reference>
<reference key="4">
    <citation type="journal article" date="2005" name="Science">
        <title>The transcriptional landscape of the mammalian genome.</title>
        <authorList>
            <person name="Carninci P."/>
            <person name="Kasukawa T."/>
            <person name="Katayama S."/>
            <person name="Gough J."/>
            <person name="Frith M.C."/>
            <person name="Maeda N."/>
            <person name="Oyama R."/>
            <person name="Ravasi T."/>
            <person name="Lenhard B."/>
            <person name="Wells C."/>
            <person name="Kodzius R."/>
            <person name="Shimokawa K."/>
            <person name="Bajic V.B."/>
            <person name="Brenner S.E."/>
            <person name="Batalov S."/>
            <person name="Forrest A.R."/>
            <person name="Zavolan M."/>
            <person name="Davis M.J."/>
            <person name="Wilming L.G."/>
            <person name="Aidinis V."/>
            <person name="Allen J.E."/>
            <person name="Ambesi-Impiombato A."/>
            <person name="Apweiler R."/>
            <person name="Aturaliya R.N."/>
            <person name="Bailey T.L."/>
            <person name="Bansal M."/>
            <person name="Baxter L."/>
            <person name="Beisel K.W."/>
            <person name="Bersano T."/>
            <person name="Bono H."/>
            <person name="Chalk A.M."/>
            <person name="Chiu K.P."/>
            <person name="Choudhary V."/>
            <person name="Christoffels A."/>
            <person name="Clutterbuck D.R."/>
            <person name="Crowe M.L."/>
            <person name="Dalla E."/>
            <person name="Dalrymple B.P."/>
            <person name="de Bono B."/>
            <person name="Della Gatta G."/>
            <person name="di Bernardo D."/>
            <person name="Down T."/>
            <person name="Engstrom P."/>
            <person name="Fagiolini M."/>
            <person name="Faulkner G."/>
            <person name="Fletcher C.F."/>
            <person name="Fukushima T."/>
            <person name="Furuno M."/>
            <person name="Futaki S."/>
            <person name="Gariboldi M."/>
            <person name="Georgii-Hemming P."/>
            <person name="Gingeras T.R."/>
            <person name="Gojobori T."/>
            <person name="Green R.E."/>
            <person name="Gustincich S."/>
            <person name="Harbers M."/>
            <person name="Hayashi Y."/>
            <person name="Hensch T.K."/>
            <person name="Hirokawa N."/>
            <person name="Hill D."/>
            <person name="Huminiecki L."/>
            <person name="Iacono M."/>
            <person name="Ikeo K."/>
            <person name="Iwama A."/>
            <person name="Ishikawa T."/>
            <person name="Jakt M."/>
            <person name="Kanapin A."/>
            <person name="Katoh M."/>
            <person name="Kawasawa Y."/>
            <person name="Kelso J."/>
            <person name="Kitamura H."/>
            <person name="Kitano H."/>
            <person name="Kollias G."/>
            <person name="Krishnan S.P."/>
            <person name="Kruger A."/>
            <person name="Kummerfeld S.K."/>
            <person name="Kurochkin I.V."/>
            <person name="Lareau L.F."/>
            <person name="Lazarevic D."/>
            <person name="Lipovich L."/>
            <person name="Liu J."/>
            <person name="Liuni S."/>
            <person name="McWilliam S."/>
            <person name="Madan Babu M."/>
            <person name="Madera M."/>
            <person name="Marchionni L."/>
            <person name="Matsuda H."/>
            <person name="Matsuzawa S."/>
            <person name="Miki H."/>
            <person name="Mignone F."/>
            <person name="Miyake S."/>
            <person name="Morris K."/>
            <person name="Mottagui-Tabar S."/>
            <person name="Mulder N."/>
            <person name="Nakano N."/>
            <person name="Nakauchi H."/>
            <person name="Ng P."/>
            <person name="Nilsson R."/>
            <person name="Nishiguchi S."/>
            <person name="Nishikawa S."/>
            <person name="Nori F."/>
            <person name="Ohara O."/>
            <person name="Okazaki Y."/>
            <person name="Orlando V."/>
            <person name="Pang K.C."/>
            <person name="Pavan W.J."/>
            <person name="Pavesi G."/>
            <person name="Pesole G."/>
            <person name="Petrovsky N."/>
            <person name="Piazza S."/>
            <person name="Reed J."/>
            <person name="Reid J.F."/>
            <person name="Ring B.Z."/>
            <person name="Ringwald M."/>
            <person name="Rost B."/>
            <person name="Ruan Y."/>
            <person name="Salzberg S.L."/>
            <person name="Sandelin A."/>
            <person name="Schneider C."/>
            <person name="Schoenbach C."/>
            <person name="Sekiguchi K."/>
            <person name="Semple C.A."/>
            <person name="Seno S."/>
            <person name="Sessa L."/>
            <person name="Sheng Y."/>
            <person name="Shibata Y."/>
            <person name="Shimada H."/>
            <person name="Shimada K."/>
            <person name="Silva D."/>
            <person name="Sinclair B."/>
            <person name="Sperling S."/>
            <person name="Stupka E."/>
            <person name="Sugiura K."/>
            <person name="Sultana R."/>
            <person name="Takenaka Y."/>
            <person name="Taki K."/>
            <person name="Tammoja K."/>
            <person name="Tan S.L."/>
            <person name="Tang S."/>
            <person name="Taylor M.S."/>
            <person name="Tegner J."/>
            <person name="Teichmann S.A."/>
            <person name="Ueda H.R."/>
            <person name="van Nimwegen E."/>
            <person name="Verardo R."/>
            <person name="Wei C.L."/>
            <person name="Yagi K."/>
            <person name="Yamanishi H."/>
            <person name="Zabarovsky E."/>
            <person name="Zhu S."/>
            <person name="Zimmer A."/>
            <person name="Hide W."/>
            <person name="Bult C."/>
            <person name="Grimmond S.M."/>
            <person name="Teasdale R.D."/>
            <person name="Liu E.T."/>
            <person name="Brusic V."/>
            <person name="Quackenbush J."/>
            <person name="Wahlestedt C."/>
            <person name="Mattick J.S."/>
            <person name="Hume D.A."/>
            <person name="Kai C."/>
            <person name="Sasaki D."/>
            <person name="Tomaru Y."/>
            <person name="Fukuda S."/>
            <person name="Kanamori-Katayama M."/>
            <person name="Suzuki M."/>
            <person name="Aoki J."/>
            <person name="Arakawa T."/>
            <person name="Iida J."/>
            <person name="Imamura K."/>
            <person name="Itoh M."/>
            <person name="Kato T."/>
            <person name="Kawaji H."/>
            <person name="Kawagashira N."/>
            <person name="Kawashima T."/>
            <person name="Kojima M."/>
            <person name="Kondo S."/>
            <person name="Konno H."/>
            <person name="Nakano K."/>
            <person name="Ninomiya N."/>
            <person name="Nishio T."/>
            <person name="Okada M."/>
            <person name="Plessy C."/>
            <person name="Shibata K."/>
            <person name="Shiraki T."/>
            <person name="Suzuki S."/>
            <person name="Tagami M."/>
            <person name="Waki K."/>
            <person name="Watahiki A."/>
            <person name="Okamura-Oho Y."/>
            <person name="Suzuki H."/>
            <person name="Kawai J."/>
            <person name="Hayashizaki Y."/>
        </authorList>
    </citation>
    <scope>NUCLEOTIDE SEQUENCE [LARGE SCALE MRNA] OF 611-1159</scope>
    <source>
        <strain>C57BL/6J</strain>
        <tissue>Thymus</tissue>
    </source>
</reference>
<reference key="5">
    <citation type="journal article" date="2002" name="Nat. Immunol.">
        <title>A requirement for CARMA1 in TCR-induced NF-kappa B activation.</title>
        <authorList>
            <person name="Wang D."/>
            <person name="You Y."/>
            <person name="Case S.M."/>
            <person name="McAllister-Lucas L.M."/>
            <person name="Wang L."/>
            <person name="DiStefano P.S."/>
            <person name="Nunez G."/>
            <person name="Bertin J."/>
            <person name="Lin X."/>
        </authorList>
    </citation>
    <scope>FUNCTION</scope>
    <scope>DISRUPTION PHENOTYPE</scope>
</reference>
<reference key="6">
    <citation type="journal article" date="2005" name="Immunity">
        <title>Phosphorylation of the CARMA1 linker controls NF-kappaB activation.</title>
        <authorList>
            <person name="Sommer K."/>
            <person name="Guo B."/>
            <person name="Pomerantz J.L."/>
            <person name="Bandaranayake A.D."/>
            <person name="Moreno-Garcia M.E."/>
            <person name="Ovechkina Y.L."/>
            <person name="Rawlings D.J."/>
        </authorList>
    </citation>
    <scope>FUNCTION</scope>
    <scope>ACTIVITY REGULATION</scope>
    <scope>PHOSPHORYLATION AT SER-564; SER-649 AND SER-657</scope>
</reference>
<reference key="7">
    <citation type="journal article" date="2010" name="Cell">
        <title>A tissue-specific atlas of mouse protein phosphorylation and expression.</title>
        <authorList>
            <person name="Huttlin E.L."/>
            <person name="Jedrychowski M.P."/>
            <person name="Elias J.E."/>
            <person name="Goswami T."/>
            <person name="Rad R."/>
            <person name="Beausoleil S.A."/>
            <person name="Villen J."/>
            <person name="Haas W."/>
            <person name="Sowa M.E."/>
            <person name="Gygi S.P."/>
        </authorList>
    </citation>
    <scope>PHOSPHORYLATION [LARGE SCALE ANALYSIS] AT SER-466; SER-512 AND SER-891</scope>
    <scope>IDENTIFICATION BY MASS SPECTROMETRY [LARGE SCALE ANALYSIS]</scope>
    <source>
        <tissue>Lung</tissue>
        <tissue>Spleen</tissue>
    </source>
</reference>
<reference evidence="15" key="8">
    <citation type="journal article" date="2012" name="PLoS ONE">
        <title>Structural insights into the assembly of CARMA1 and BCL10.</title>
        <authorList>
            <person name="Li S."/>
            <person name="Yang X."/>
            <person name="Shao J."/>
            <person name="Shen Y."/>
        </authorList>
    </citation>
    <scope>X-RAY CRYSTALLOGRAPHY (1.75 ANGSTROMS) OF 18-110</scope>
    <scope>INTERACTION WITH BCL10</scope>
    <scope>MUTAGENESIS OF ARG-35; LYS-41; LYS-69 AND ARG-72</scope>
</reference>
<sequence>MPGGGPAMDDYMETLKDEEEALWDNVECNRHMLSRYINPAKLTPYLRQCKVIDEQDEDEVLNAPMLPSKINRAGRLLDILHTKGQRGYVVFLESLEFYYPELYKLVTGKEPTRRFSTIVVEEGHEGLTHFLMNEVIKLQQQVKAKDLQRCELLAKSRQLEDEKKQLSLIRVELLTFQERYYKMKEERDSYNDELVKVKDDNYNLAMRYAQLSEEKNMAVMRSRDLQLEIDQLKHRLNKMEEECKLERNQSLKLKNDIENRPRKEQVLELERENEMLKTKIQELQSIIQAGKRSLPDSDKAILDILEHDRKEALEDRQELVNKIYNLQEEVRQAEELRDKYLEEKEDLELKCSTLGKDCEMYKHRMNTVMLQLEEVERERDQAFHSRDEAQTQYSQCLIEKDKYRKQIRELEEKNDEMRIEMVRREACIVNLESKLRRLSKDNGSLDQSLPRHLPATIISQNLGDTSPRTNGQEADDSSTSEESPEDSKYFLPYHPPRRRMNLKGIQLQRAKSPISMKQASEFQALMRTVKGHEEDFTDGSPSSSRSLPVTSSFSKMQPHRSRSSIMSITAEPPGNDSIVRRCKEDAPHRSTVEEDNDSCGFDALDLDDENHERYSFGPPSIHSSSSSHQSEGLDAYDLEQVNLMLRKFSLERPFRPSVTSGGHVRGTGPLVQHTTLNGDGLITQLTLLGGNARGSFIHSVKPGSLAERAGLREGHQLLLLEGCIRGERQSVPLDACTKEEARWTIQRCSGLITLHYKVNHEGYRKLLKEMEDGLITSGDSFYIRLNLNISSQLDACSMSLKCDDVVHVLDTMYQDRHEWLCARVDPFTDQDLDTGTIPSYSRAQQLLLVKLQRLVHRGNREEADSAHHTLRSLRNTLQPEEMLSTSDPRVSPRLSRASFFFGQLLQFVSRSENKYKRMNSNERVRIISGSPLGSLSRSSLDATKLLTEKHEELDPENELSRNLTLIPYSLVRAFHCERRRPVLFTPTMLAKTLVQKLLNSGGAMEFTICKSDIVTRDEFLRKQKTETIIYSREKNPNTFECIVPANIEAVAAKNKHCLLEAGIGCVRDLIKCKVYPIVLLIRVSEKNIKRFRKLLPRPETEEEFLRVCRLKEKELEALPCLYATVEAEMWSSVEELLRVLKDKIVEEQRKTIWVDEDQL</sequence>
<evidence type="ECO:0000250" key="1">
    <source>
        <dbReference type="UniProtKB" id="Q9BXL7"/>
    </source>
</evidence>
<evidence type="ECO:0000255" key="2"/>
<evidence type="ECO:0000255" key="3">
    <source>
        <dbReference type="PROSITE-ProRule" id="PRU00046"/>
    </source>
</evidence>
<evidence type="ECO:0000256" key="4">
    <source>
        <dbReference type="SAM" id="MobiDB-lite"/>
    </source>
</evidence>
<evidence type="ECO:0000269" key="5">
    <source>
    </source>
</evidence>
<evidence type="ECO:0000269" key="6">
    <source>
    </source>
</evidence>
<evidence type="ECO:0000269" key="7">
    <source>
    </source>
</evidence>
<evidence type="ECO:0000269" key="8">
    <source>
    </source>
</evidence>
<evidence type="ECO:0000303" key="9">
    <source>
    </source>
</evidence>
<evidence type="ECO:0000303" key="10">
    <source>
    </source>
</evidence>
<evidence type="ECO:0000303" key="11">
    <source>
    </source>
</evidence>
<evidence type="ECO:0000303" key="12">
    <source>
    </source>
</evidence>
<evidence type="ECO:0000305" key="13"/>
<evidence type="ECO:0000312" key="14">
    <source>
        <dbReference type="MGI" id="MGI:1916978"/>
    </source>
</evidence>
<evidence type="ECO:0007744" key="15">
    <source>
        <dbReference type="PDB" id="4I16"/>
    </source>
</evidence>
<evidence type="ECO:0007744" key="16">
    <source>
    </source>
</evidence>
<evidence type="ECO:0007829" key="17">
    <source>
        <dbReference type="PDB" id="4I16"/>
    </source>
</evidence>
<gene>
    <name evidence="9 14" type="primary">Card11</name>
    <name evidence="12" type="synonym">Carma1</name>
</gene>
<keyword id="KW-0002">3D-structure</keyword>
<keyword id="KW-0025">Alternative splicing</keyword>
<keyword id="KW-0175">Coiled coil</keyword>
<keyword id="KW-0963">Cytoplasm</keyword>
<keyword id="KW-1015">Disulfide bond</keyword>
<keyword id="KW-0391">Immunity</keyword>
<keyword id="KW-1017">Isopeptide bond</keyword>
<keyword id="KW-0472">Membrane</keyword>
<keyword id="KW-0597">Phosphoprotein</keyword>
<keyword id="KW-1185">Reference proteome</keyword>
<comment type="function">
    <text evidence="1 5 6 7">Adapter protein that plays a key role in adaptive immune response by transducing the activation of NF-kappa-B downstream of T-cell receptor (TCR) and B-cell receptor (BCR) engagement (PubMed:12154356, PubMed:12356734, PubMed:16356855). Transduces signals downstream TCR or BCR activation via the formation of a multiprotein complex together with BCL10 and MALT1 that induces NF-kappa-B and MAP kinase p38 (MAPK11, MAPK12, MAPK13 and/or MAPK14) pathways (PubMed:12154356, PubMed:12356734, PubMed:16356855). Upon activation in response to TCR or BCR triggering, CARD11 homooligomerizes to form a nucleating helical template that recruits BCL10 via CARD-CARD interaction, thereby promoting polymerization of BCL10 and subsequent recruitment of MALT1: this leads to I-kappa-B kinase (IKK) phosphorylation and degradation, and release of NF-kappa-B proteins for nuclear translocation (By similarity). Its binding to DPP4 induces T-cell proliferation and NF-kappa-B activation in a T-cell receptor/CD3-dependent manner (By similarity). Promotes linear ubiquitination of BCL10 by promoting the targeting of BCL10 to RNF31/HOIP (By similarity). Stimulates the phosphorylation of BCL10 (By similarity). Also activates the TORC1 signaling pathway (By similarity).</text>
</comment>
<comment type="activity regulation">
    <text evidence="1 7">Maintained in an autoinhibited state via homodimerization in which the CARD domain forms an extensive interaction with the adjacent linker and coiled-coil regions (By similarity). Activation downstream of T-cell receptor (TCR) by phosphorylation by PRKCB and PRKCQ triggers CARD11 homooligomerization and BCL10 recruitment, followed by activation of NF-kappa-B (PubMed:16356855).</text>
</comment>
<comment type="subunit">
    <text evidence="1 8">Homodimer; disulfide-linked (By similarity). Homomultimer; polymerizes following activation, forming a nucleating helical template that seeds BCL10-filament formation via a CARD-CARD interaction (By similarity). Interacts (via CARD domain) with BCL10 (via CARD domain); interaction takes place following CARD11 activation and polymerization, leading to the formation of a filamentous CBM complex assembly (PubMed:22880103). Component of a CBM complex (CARD11-BCL10-MALT1) complex involved in NF-kappa-B activation (By similarity). Found in a membrane raft complex, at least composed of BCL10, CARD11, DPP4 and IKBKB (By similarity). Interacts (via PDZ domain) with DPP4 (via cytoplasmic tail) (By similarity).</text>
</comment>
<comment type="subcellular location">
    <subcellularLocation>
        <location evidence="1">Cytoplasm</location>
    </subcellularLocation>
    <subcellularLocation>
        <location evidence="1">Membrane raft</location>
    </subcellularLocation>
    <text evidence="1">Colocalized with DPP4 in membrane rafts.</text>
</comment>
<comment type="alternative products">
    <event type="alternative splicing"/>
    <isoform>
        <id>Q8CIS0-1</id>
        <name>1</name>
        <sequence type="displayed"/>
    </isoform>
    <isoform>
        <id>Q8CIS0-2</id>
        <name>2</name>
        <sequence type="described" ref="VSP_031595"/>
    </isoform>
</comment>
<comment type="domain">
    <text evidence="1">The linker region, also named autoinhibitory interface, is less inhibitory on its own than that of CARD9. The linker region together with the inhibitory domain (ID) are required to prevent constitutive activation and maintain CARD11 in an autoinhibitory state. Disruption of the inhibitory domain (ID) region triggers polymerization and activation, leading to formation of BCL10-nucleating filaments.</text>
</comment>
<comment type="PTM">
    <text evidence="7">Phosphorylation at Ser-564, Ser-649 and Ser-657 by PRKCB and PRKCQ leads to a shift from an inactive to an active form that activates the NF-kappa-B signaling.</text>
</comment>
<comment type="disruption phenotype">
    <text evidence="5">Impaired activation of NF-kappa-B downstream of T-cell receptor (TCR), leading to defects in interleukin-2 (IL2) production.</text>
</comment>
<comment type="sequence caution" evidence="13">
    <conflict type="erroneous initiation">
        <sequence resource="EMBL-CDS" id="BAD21384"/>
    </conflict>
    <text>Extended N-terminus.</text>
</comment>